<gene>
    <name evidence="1" type="primary">dinB</name>
    <name type="synonym">dinP</name>
    <name type="ordered locus">XAC3622</name>
</gene>
<sequence>MRKIVHVDMDAFYASVEQRDDPSLRGKPVVVAWRGARSVVCAASYEARIFGIRSAMPAVRAERLCPDAIFVPPDFTRYKAVSRQVREIFHRHTDLVEPLSLDEAYLDVTHAKTGMQLATEVAQLIRTQIREETQLTASAGIAPNKFLAKIASDWRKPDGQFVIAPSRVDAFLLPLKVNRIPGVGKVMDGKLAALGIVTVADLRQRPLEELQAHFGSFGQSLYRRARGIDERPVEPDQEVQSVSSEDTFSEDLALDALAPHILRLAEKTWLATRRTERIGRTVVLKLKTSNFRILTRSYTPEQPPTSQEALAQIALALTRRVELPAQTRYRLVGVGLGGFSDVENGAVQGQLFGQMPPLE</sequence>
<reference key="1">
    <citation type="journal article" date="2002" name="Nature">
        <title>Comparison of the genomes of two Xanthomonas pathogens with differing host specificities.</title>
        <authorList>
            <person name="da Silva A.C.R."/>
            <person name="Ferro J.A."/>
            <person name="Reinach F.C."/>
            <person name="Farah C.S."/>
            <person name="Furlan L.R."/>
            <person name="Quaggio R.B."/>
            <person name="Monteiro-Vitorello C.B."/>
            <person name="Van Sluys M.A."/>
            <person name="Almeida N.F. Jr."/>
            <person name="Alves L.M.C."/>
            <person name="do Amaral A.M."/>
            <person name="Bertolini M.C."/>
            <person name="Camargo L.E.A."/>
            <person name="Camarotte G."/>
            <person name="Cannavan F."/>
            <person name="Cardozo J."/>
            <person name="Chambergo F."/>
            <person name="Ciapina L.P."/>
            <person name="Cicarelli R.M.B."/>
            <person name="Coutinho L.L."/>
            <person name="Cursino-Santos J.R."/>
            <person name="El-Dorry H."/>
            <person name="Faria J.B."/>
            <person name="Ferreira A.J.S."/>
            <person name="Ferreira R.C.C."/>
            <person name="Ferro M.I.T."/>
            <person name="Formighieri E.F."/>
            <person name="Franco M.C."/>
            <person name="Greggio C.C."/>
            <person name="Gruber A."/>
            <person name="Katsuyama A.M."/>
            <person name="Kishi L.T."/>
            <person name="Leite R.P."/>
            <person name="Lemos E.G.M."/>
            <person name="Lemos M.V.F."/>
            <person name="Locali E.C."/>
            <person name="Machado M.A."/>
            <person name="Madeira A.M.B.N."/>
            <person name="Martinez-Rossi N.M."/>
            <person name="Martins E.C."/>
            <person name="Meidanis J."/>
            <person name="Menck C.F.M."/>
            <person name="Miyaki C.Y."/>
            <person name="Moon D.H."/>
            <person name="Moreira L.M."/>
            <person name="Novo M.T.M."/>
            <person name="Okura V.K."/>
            <person name="Oliveira M.C."/>
            <person name="Oliveira V.R."/>
            <person name="Pereira H.A."/>
            <person name="Rossi A."/>
            <person name="Sena J.A.D."/>
            <person name="Silva C."/>
            <person name="de Souza R.F."/>
            <person name="Spinola L.A.F."/>
            <person name="Takita M.A."/>
            <person name="Tamura R.E."/>
            <person name="Teixeira E.C."/>
            <person name="Tezza R.I.D."/>
            <person name="Trindade dos Santos M."/>
            <person name="Truffi D."/>
            <person name="Tsai S.M."/>
            <person name="White F.F."/>
            <person name="Setubal J.C."/>
            <person name="Kitajima J.P."/>
        </authorList>
    </citation>
    <scope>NUCLEOTIDE SEQUENCE [LARGE SCALE GENOMIC DNA]</scope>
    <source>
        <strain>306</strain>
    </source>
</reference>
<name>DPO4_XANAC</name>
<comment type="function">
    <text evidence="1">Poorly processive, error-prone DNA polymerase involved in untargeted mutagenesis. Copies undamaged DNA at stalled replication forks, which arise in vivo from mismatched or misaligned primer ends. These misaligned primers can be extended by PolIV. Exhibits no 3'-5' exonuclease (proofreading) activity. May be involved in translesional synthesis, in conjunction with the beta clamp from PolIII.</text>
</comment>
<comment type="catalytic activity">
    <reaction evidence="1">
        <text>DNA(n) + a 2'-deoxyribonucleoside 5'-triphosphate = DNA(n+1) + diphosphate</text>
        <dbReference type="Rhea" id="RHEA:22508"/>
        <dbReference type="Rhea" id="RHEA-COMP:17339"/>
        <dbReference type="Rhea" id="RHEA-COMP:17340"/>
        <dbReference type="ChEBI" id="CHEBI:33019"/>
        <dbReference type="ChEBI" id="CHEBI:61560"/>
        <dbReference type="ChEBI" id="CHEBI:173112"/>
        <dbReference type="EC" id="2.7.7.7"/>
    </reaction>
</comment>
<comment type="cofactor">
    <cofactor evidence="1">
        <name>Mg(2+)</name>
        <dbReference type="ChEBI" id="CHEBI:18420"/>
    </cofactor>
    <text evidence="1">Binds 2 magnesium ions per subunit.</text>
</comment>
<comment type="subunit">
    <text evidence="1">Monomer.</text>
</comment>
<comment type="subcellular location">
    <subcellularLocation>
        <location evidence="1">Cytoplasm</location>
    </subcellularLocation>
</comment>
<comment type="similarity">
    <text evidence="1">Belongs to the DNA polymerase type-Y family.</text>
</comment>
<evidence type="ECO:0000255" key="1">
    <source>
        <dbReference type="HAMAP-Rule" id="MF_01113"/>
    </source>
</evidence>
<accession>Q8PGJ4</accession>
<organism>
    <name type="scientific">Xanthomonas axonopodis pv. citri (strain 306)</name>
    <dbReference type="NCBI Taxonomy" id="190486"/>
    <lineage>
        <taxon>Bacteria</taxon>
        <taxon>Pseudomonadati</taxon>
        <taxon>Pseudomonadota</taxon>
        <taxon>Gammaproteobacteria</taxon>
        <taxon>Lysobacterales</taxon>
        <taxon>Lysobacteraceae</taxon>
        <taxon>Xanthomonas</taxon>
    </lineage>
</organism>
<keyword id="KW-0963">Cytoplasm</keyword>
<keyword id="KW-0227">DNA damage</keyword>
<keyword id="KW-0234">DNA repair</keyword>
<keyword id="KW-0235">DNA replication</keyword>
<keyword id="KW-0238">DNA-binding</keyword>
<keyword id="KW-0239">DNA-directed DNA polymerase</keyword>
<keyword id="KW-0460">Magnesium</keyword>
<keyword id="KW-0479">Metal-binding</keyword>
<keyword id="KW-0515">Mutator protein</keyword>
<keyword id="KW-0548">Nucleotidyltransferase</keyword>
<keyword id="KW-0808">Transferase</keyword>
<protein>
    <recommendedName>
        <fullName evidence="1">DNA polymerase IV</fullName>
        <shortName evidence="1">Pol IV</shortName>
        <ecNumber evidence="1">2.7.7.7</ecNumber>
    </recommendedName>
</protein>
<feature type="chain" id="PRO_0000173966" description="DNA polymerase IV">
    <location>
        <begin position="1"/>
        <end position="359"/>
    </location>
</feature>
<feature type="domain" description="UmuC" evidence="1">
    <location>
        <begin position="4"/>
        <end position="184"/>
    </location>
</feature>
<feature type="active site" evidence="1">
    <location>
        <position position="103"/>
    </location>
</feature>
<feature type="binding site" evidence="1">
    <location>
        <position position="8"/>
    </location>
    <ligand>
        <name>Mg(2+)</name>
        <dbReference type="ChEBI" id="CHEBI:18420"/>
    </ligand>
</feature>
<feature type="binding site" evidence="1">
    <location>
        <position position="102"/>
    </location>
    <ligand>
        <name>Mg(2+)</name>
        <dbReference type="ChEBI" id="CHEBI:18420"/>
    </ligand>
</feature>
<feature type="site" description="Substrate discrimination" evidence="1">
    <location>
        <position position="13"/>
    </location>
</feature>
<proteinExistence type="inferred from homology"/>
<dbReference type="EC" id="2.7.7.7" evidence="1"/>
<dbReference type="EMBL" id="AE008923">
    <property type="protein sequence ID" value="AAM38465.1"/>
    <property type="molecule type" value="Genomic_DNA"/>
</dbReference>
<dbReference type="RefSeq" id="WP_011052404.1">
    <property type="nucleotide sequence ID" value="NC_003919.1"/>
</dbReference>
<dbReference type="SMR" id="Q8PGJ4"/>
<dbReference type="GeneID" id="66912656"/>
<dbReference type="KEGG" id="xac:XAC3622"/>
<dbReference type="eggNOG" id="COG0389">
    <property type="taxonomic scope" value="Bacteria"/>
</dbReference>
<dbReference type="HOGENOM" id="CLU_012348_1_2_6"/>
<dbReference type="Proteomes" id="UP000000576">
    <property type="component" value="Chromosome"/>
</dbReference>
<dbReference type="GO" id="GO:0005829">
    <property type="term" value="C:cytosol"/>
    <property type="evidence" value="ECO:0007669"/>
    <property type="project" value="TreeGrafter"/>
</dbReference>
<dbReference type="GO" id="GO:0003684">
    <property type="term" value="F:damaged DNA binding"/>
    <property type="evidence" value="ECO:0007669"/>
    <property type="project" value="InterPro"/>
</dbReference>
<dbReference type="GO" id="GO:0003887">
    <property type="term" value="F:DNA-directed DNA polymerase activity"/>
    <property type="evidence" value="ECO:0007669"/>
    <property type="project" value="UniProtKB-UniRule"/>
</dbReference>
<dbReference type="GO" id="GO:0000287">
    <property type="term" value="F:magnesium ion binding"/>
    <property type="evidence" value="ECO:0007669"/>
    <property type="project" value="UniProtKB-UniRule"/>
</dbReference>
<dbReference type="GO" id="GO:0006261">
    <property type="term" value="P:DNA-templated DNA replication"/>
    <property type="evidence" value="ECO:0007669"/>
    <property type="project" value="UniProtKB-UniRule"/>
</dbReference>
<dbReference type="GO" id="GO:0042276">
    <property type="term" value="P:error-prone translesion synthesis"/>
    <property type="evidence" value="ECO:0007669"/>
    <property type="project" value="TreeGrafter"/>
</dbReference>
<dbReference type="GO" id="GO:0009432">
    <property type="term" value="P:SOS response"/>
    <property type="evidence" value="ECO:0007669"/>
    <property type="project" value="TreeGrafter"/>
</dbReference>
<dbReference type="CDD" id="cd03586">
    <property type="entry name" value="PolY_Pol_IV_kappa"/>
    <property type="match status" value="1"/>
</dbReference>
<dbReference type="FunFam" id="1.10.150.20:FF:000019">
    <property type="entry name" value="DNA polymerase IV"/>
    <property type="match status" value="1"/>
</dbReference>
<dbReference type="FunFam" id="3.30.1490.100:FF:000004">
    <property type="entry name" value="DNA polymerase IV"/>
    <property type="match status" value="1"/>
</dbReference>
<dbReference type="FunFam" id="3.40.1170.60:FF:000001">
    <property type="entry name" value="DNA polymerase IV"/>
    <property type="match status" value="1"/>
</dbReference>
<dbReference type="Gene3D" id="3.30.70.270">
    <property type="match status" value="1"/>
</dbReference>
<dbReference type="Gene3D" id="3.40.1170.60">
    <property type="match status" value="1"/>
</dbReference>
<dbReference type="Gene3D" id="1.10.150.20">
    <property type="entry name" value="5' to 3' exonuclease, C-terminal subdomain"/>
    <property type="match status" value="1"/>
</dbReference>
<dbReference type="Gene3D" id="3.30.1490.100">
    <property type="entry name" value="DNA polymerase, Y-family, little finger domain"/>
    <property type="match status" value="1"/>
</dbReference>
<dbReference type="HAMAP" id="MF_01113">
    <property type="entry name" value="DNApol_IV"/>
    <property type="match status" value="1"/>
</dbReference>
<dbReference type="InterPro" id="IPR043502">
    <property type="entry name" value="DNA/RNA_pol_sf"/>
</dbReference>
<dbReference type="InterPro" id="IPR036775">
    <property type="entry name" value="DNA_pol_Y-fam_lit_finger_sf"/>
</dbReference>
<dbReference type="InterPro" id="IPR017961">
    <property type="entry name" value="DNA_pol_Y-fam_little_finger"/>
</dbReference>
<dbReference type="InterPro" id="IPR050116">
    <property type="entry name" value="DNA_polymerase-Y"/>
</dbReference>
<dbReference type="InterPro" id="IPR022880">
    <property type="entry name" value="DNApol_IV"/>
</dbReference>
<dbReference type="InterPro" id="IPR053848">
    <property type="entry name" value="IMS_HHH_1"/>
</dbReference>
<dbReference type="InterPro" id="IPR043128">
    <property type="entry name" value="Rev_trsase/Diguanyl_cyclase"/>
</dbReference>
<dbReference type="InterPro" id="IPR001126">
    <property type="entry name" value="UmuC"/>
</dbReference>
<dbReference type="NCBIfam" id="NF002677">
    <property type="entry name" value="PRK02406.1"/>
    <property type="match status" value="1"/>
</dbReference>
<dbReference type="PANTHER" id="PTHR11076:SF33">
    <property type="entry name" value="DNA POLYMERASE KAPPA"/>
    <property type="match status" value="1"/>
</dbReference>
<dbReference type="PANTHER" id="PTHR11076">
    <property type="entry name" value="DNA REPAIR POLYMERASE UMUC / TRANSFERASE FAMILY MEMBER"/>
    <property type="match status" value="1"/>
</dbReference>
<dbReference type="Pfam" id="PF00817">
    <property type="entry name" value="IMS"/>
    <property type="match status" value="1"/>
</dbReference>
<dbReference type="Pfam" id="PF11799">
    <property type="entry name" value="IMS_C"/>
    <property type="match status" value="1"/>
</dbReference>
<dbReference type="Pfam" id="PF21999">
    <property type="entry name" value="IMS_HHH_1"/>
    <property type="match status" value="1"/>
</dbReference>
<dbReference type="SUPFAM" id="SSF56672">
    <property type="entry name" value="DNA/RNA polymerases"/>
    <property type="match status" value="1"/>
</dbReference>
<dbReference type="SUPFAM" id="SSF100879">
    <property type="entry name" value="Lesion bypass DNA polymerase (Y-family), little finger domain"/>
    <property type="match status" value="1"/>
</dbReference>
<dbReference type="PROSITE" id="PS50173">
    <property type="entry name" value="UMUC"/>
    <property type="match status" value="1"/>
</dbReference>